<sequence length="199" mass="22336">AICSLVLYLLTLMLMEKLSSNTVDAQEVELIWTILPAIVLILLALPSLQILYMMDEIDEPDLTLKAIGHQWYWTYEYTDFKDLSFDSYMVPTSELPSGHFRLLEVDHRVVVPMESPIRVIITAGDVLHSWAVPTLGVKTDAIPGRLNQTSFITTRPGIFYGQCSEICGANHSYMPIVVESTPLTHFENWSSLLSASSSL</sequence>
<evidence type="ECO:0000250" key="1">
    <source>
        <dbReference type="UniProtKB" id="P00403"/>
    </source>
</evidence>
<evidence type="ECO:0000250" key="2">
    <source>
        <dbReference type="UniProtKB" id="P00410"/>
    </source>
</evidence>
<evidence type="ECO:0000250" key="3">
    <source>
        <dbReference type="UniProtKB" id="P68530"/>
    </source>
</evidence>
<evidence type="ECO:0000305" key="4"/>
<keyword id="KW-0186">Copper</keyword>
<keyword id="KW-0249">Electron transport</keyword>
<keyword id="KW-0460">Magnesium</keyword>
<keyword id="KW-0472">Membrane</keyword>
<keyword id="KW-0479">Metal-binding</keyword>
<keyword id="KW-0496">Mitochondrion</keyword>
<keyword id="KW-0999">Mitochondrion inner membrane</keyword>
<keyword id="KW-0679">Respiratory chain</keyword>
<keyword id="KW-1278">Translocase</keyword>
<keyword id="KW-0812">Transmembrane</keyword>
<keyword id="KW-1133">Transmembrane helix</keyword>
<keyword id="KW-0813">Transport</keyword>
<accession>O03891</accession>
<reference key="1">
    <citation type="book" date="1997" name="Avian molecular evolution and systematics">
        <title>Phylogenetic relationships of the ratite birds: resolving conflicts between molecular and morphological data sets.</title>
        <editorList>
            <person name="Mindell D.P."/>
        </editorList>
        <authorList>
            <person name="Lee K."/>
            <person name="Feinstein J."/>
            <person name="Cracraft J."/>
        </authorList>
    </citation>
    <scope>NUCLEOTIDE SEQUENCE [GENOMIC DNA]</scope>
</reference>
<organism>
    <name type="scientific">Dromaius novaehollandiae</name>
    <name type="common">Emu</name>
    <dbReference type="NCBI Taxonomy" id="8790"/>
    <lineage>
        <taxon>Eukaryota</taxon>
        <taxon>Metazoa</taxon>
        <taxon>Chordata</taxon>
        <taxon>Craniata</taxon>
        <taxon>Vertebrata</taxon>
        <taxon>Euteleostomi</taxon>
        <taxon>Archelosauria</taxon>
        <taxon>Archosauria</taxon>
        <taxon>Dinosauria</taxon>
        <taxon>Saurischia</taxon>
        <taxon>Theropoda</taxon>
        <taxon>Coelurosauria</taxon>
        <taxon>Aves</taxon>
        <taxon>Palaeognathae</taxon>
        <taxon>Casuariiformes</taxon>
        <taxon>Dromaiidae</taxon>
        <taxon>Dromaius</taxon>
    </lineage>
</organism>
<gene>
    <name type="primary">MT-CO2</name>
    <name type="synonym">COII</name>
    <name type="synonym">COXII</name>
    <name type="synonym">MTCO2</name>
</gene>
<dbReference type="EC" id="7.1.1.9"/>
<dbReference type="EMBL" id="U76066">
    <property type="protein sequence ID" value="AAB61320.1"/>
    <property type="molecule type" value="Genomic_DNA"/>
</dbReference>
<dbReference type="SMR" id="O03891"/>
<dbReference type="Proteomes" id="UP000694423">
    <property type="component" value="Unplaced"/>
</dbReference>
<dbReference type="GO" id="GO:0005743">
    <property type="term" value="C:mitochondrial inner membrane"/>
    <property type="evidence" value="ECO:0007669"/>
    <property type="project" value="UniProtKB-SubCell"/>
</dbReference>
<dbReference type="GO" id="GO:0045277">
    <property type="term" value="C:respiratory chain complex IV"/>
    <property type="evidence" value="ECO:0000250"/>
    <property type="project" value="UniProtKB"/>
</dbReference>
<dbReference type="GO" id="GO:0005507">
    <property type="term" value="F:copper ion binding"/>
    <property type="evidence" value="ECO:0007669"/>
    <property type="project" value="InterPro"/>
</dbReference>
<dbReference type="GO" id="GO:0004129">
    <property type="term" value="F:cytochrome-c oxidase activity"/>
    <property type="evidence" value="ECO:0007669"/>
    <property type="project" value="UniProtKB-EC"/>
</dbReference>
<dbReference type="GO" id="GO:0042773">
    <property type="term" value="P:ATP synthesis coupled electron transport"/>
    <property type="evidence" value="ECO:0007669"/>
    <property type="project" value="TreeGrafter"/>
</dbReference>
<dbReference type="CDD" id="cd13912">
    <property type="entry name" value="CcO_II_C"/>
    <property type="match status" value="1"/>
</dbReference>
<dbReference type="FunFam" id="2.60.40.420:FF:000001">
    <property type="entry name" value="Cytochrome c oxidase subunit 2"/>
    <property type="match status" value="1"/>
</dbReference>
<dbReference type="Gene3D" id="1.10.287.90">
    <property type="match status" value="1"/>
</dbReference>
<dbReference type="Gene3D" id="2.60.40.420">
    <property type="entry name" value="Cupredoxins - blue copper proteins"/>
    <property type="match status" value="1"/>
</dbReference>
<dbReference type="InterPro" id="IPR045187">
    <property type="entry name" value="CcO_II"/>
</dbReference>
<dbReference type="InterPro" id="IPR002429">
    <property type="entry name" value="CcO_II-like_C"/>
</dbReference>
<dbReference type="InterPro" id="IPR034210">
    <property type="entry name" value="CcO_II_C"/>
</dbReference>
<dbReference type="InterPro" id="IPR001505">
    <property type="entry name" value="Copper_CuA"/>
</dbReference>
<dbReference type="InterPro" id="IPR008972">
    <property type="entry name" value="Cupredoxin"/>
</dbReference>
<dbReference type="InterPro" id="IPR014222">
    <property type="entry name" value="Cyt_c_oxidase_su2"/>
</dbReference>
<dbReference type="InterPro" id="IPR011759">
    <property type="entry name" value="Cyt_c_oxidase_su2_TM_dom"/>
</dbReference>
<dbReference type="InterPro" id="IPR036257">
    <property type="entry name" value="Cyt_c_oxidase_su2_TM_sf"/>
</dbReference>
<dbReference type="NCBIfam" id="TIGR02866">
    <property type="entry name" value="CoxB"/>
    <property type="match status" value="1"/>
</dbReference>
<dbReference type="PANTHER" id="PTHR22888:SF9">
    <property type="entry name" value="CYTOCHROME C OXIDASE SUBUNIT 2"/>
    <property type="match status" value="1"/>
</dbReference>
<dbReference type="PANTHER" id="PTHR22888">
    <property type="entry name" value="CYTOCHROME C OXIDASE, SUBUNIT II"/>
    <property type="match status" value="1"/>
</dbReference>
<dbReference type="Pfam" id="PF00116">
    <property type="entry name" value="COX2"/>
    <property type="match status" value="1"/>
</dbReference>
<dbReference type="Pfam" id="PF02790">
    <property type="entry name" value="COX2_TM"/>
    <property type="match status" value="1"/>
</dbReference>
<dbReference type="PRINTS" id="PR01166">
    <property type="entry name" value="CYCOXIDASEII"/>
</dbReference>
<dbReference type="SUPFAM" id="SSF49503">
    <property type="entry name" value="Cupredoxins"/>
    <property type="match status" value="1"/>
</dbReference>
<dbReference type="SUPFAM" id="SSF81464">
    <property type="entry name" value="Cytochrome c oxidase subunit II-like, transmembrane region"/>
    <property type="match status" value="1"/>
</dbReference>
<dbReference type="PROSITE" id="PS00078">
    <property type="entry name" value="COX2"/>
    <property type="match status" value="1"/>
</dbReference>
<dbReference type="PROSITE" id="PS50857">
    <property type="entry name" value="COX2_CUA"/>
    <property type="match status" value="1"/>
</dbReference>
<dbReference type="PROSITE" id="PS50999">
    <property type="entry name" value="COX2_TM"/>
    <property type="match status" value="1"/>
</dbReference>
<protein>
    <recommendedName>
        <fullName>Cytochrome c oxidase subunit 2</fullName>
        <ecNumber>7.1.1.9</ecNumber>
    </recommendedName>
    <alternativeName>
        <fullName>Cytochrome c oxidase polypeptide II</fullName>
    </alternativeName>
</protein>
<comment type="function">
    <text evidence="2">Component of the cytochrome c oxidase, the last enzyme in the mitochondrial electron transport chain which drives oxidative phosphorylation. The respiratory chain contains 3 multisubunit complexes succinate dehydrogenase (complex II, CII), ubiquinol-cytochrome c oxidoreductase (cytochrome b-c1 complex, complex III, CIII) and cytochrome c oxidase (complex IV, CIV), that cooperate to transfer electrons derived from NADH and succinate to molecular oxygen, creating an electrochemical gradient over the inner membrane that drives transmembrane transport and the ATP synthase. Cytochrome c oxidase is the component of the respiratory chain that catalyzes the reduction of oxygen to water. Electrons originating from reduced cytochrome c in the intermembrane space (IMS) are transferred via the dinuclear copper A center (CU(A)) of subunit 2 and heme A of subunit 1 to the active site in subunit 1, a binuclear center (BNC) formed by heme A3 and copper B (CU(B)). The BNC reduces molecular oxygen to 2 water molecules using 4 electrons from cytochrome c in the IMS and 4 protons from the mitochondrial matrix.</text>
</comment>
<comment type="catalytic activity">
    <reaction evidence="2">
        <text>4 Fe(II)-[cytochrome c] + O2 + 8 H(+)(in) = 4 Fe(III)-[cytochrome c] + 2 H2O + 4 H(+)(out)</text>
        <dbReference type="Rhea" id="RHEA:11436"/>
        <dbReference type="Rhea" id="RHEA-COMP:10350"/>
        <dbReference type="Rhea" id="RHEA-COMP:14399"/>
        <dbReference type="ChEBI" id="CHEBI:15377"/>
        <dbReference type="ChEBI" id="CHEBI:15378"/>
        <dbReference type="ChEBI" id="CHEBI:15379"/>
        <dbReference type="ChEBI" id="CHEBI:29033"/>
        <dbReference type="ChEBI" id="CHEBI:29034"/>
        <dbReference type="EC" id="7.1.1.9"/>
    </reaction>
    <physiologicalReaction direction="left-to-right" evidence="2">
        <dbReference type="Rhea" id="RHEA:11437"/>
    </physiologicalReaction>
</comment>
<comment type="cofactor">
    <cofactor evidence="3">
        <name>Cu cation</name>
        <dbReference type="ChEBI" id="CHEBI:23378"/>
    </cofactor>
    <text evidence="3">Binds a dinuclear copper A center per subunit.</text>
</comment>
<comment type="subunit">
    <text evidence="1 3">Component of the cytochrome c oxidase (complex IV, CIV), a multisubunit enzyme composed of 14 subunits. The complex is composed of a catalytic core of 3 subunits MT-CO1, MT-CO2 and MT-CO3, encoded in the mitochondrial DNA, and 11 supernumerary subunits COX4I, COX5A, COX5B, COX6A, COX6B, COX6C, COX7A, COX7B, COX7C, COX8 and NDUFA4, which are encoded in the nuclear genome. The complex exists as a monomer or a dimer and forms supercomplexes (SCs) in the inner mitochondrial membrane with NADH-ubiquinone oxidoreductase (complex I, CI) and ubiquinol-cytochrome c oxidoreductase (cytochrome b-c1 complex, complex III, CIII), resulting in different assemblies (supercomplex SCI(1)III(2)IV(1) and megacomplex MCI(2)III(2)IV(2)) (By similarity). Found in a complex with TMEM177, COA6, COX18, COX20, SCO1 and SCO2. Interacts with TMEM177 in a COX20-dependent manner. Interacts with COX20. Interacts with COX16 (By similarity).</text>
</comment>
<comment type="subcellular location">
    <subcellularLocation>
        <location evidence="3">Mitochondrion inner membrane</location>
        <topology evidence="3">Multi-pass membrane protein</topology>
    </subcellularLocation>
</comment>
<comment type="similarity">
    <text evidence="4">Belongs to the cytochrome c oxidase subunit 2 family.</text>
</comment>
<proteinExistence type="inferred from homology"/>
<geneLocation type="mitochondrion"/>
<name>COX2_DRONO</name>
<feature type="chain" id="PRO_0000183581" description="Cytochrome c oxidase subunit 2">
    <location>
        <begin position="1" status="less than"/>
        <end position="199"/>
    </location>
</feature>
<feature type="transmembrane region" description="Helical; Name=I" evidence="3">
    <location>
        <begin position="1" status="less than"/>
        <end position="13"/>
    </location>
</feature>
<feature type="topological domain" description="Mitochondrial matrix" evidence="3">
    <location>
        <begin position="14"/>
        <end position="26"/>
    </location>
</feature>
<feature type="transmembrane region" description="Helical; Name=II" evidence="3">
    <location>
        <begin position="27"/>
        <end position="54"/>
    </location>
</feature>
<feature type="topological domain" description="Mitochondrial intermembrane" evidence="3">
    <location>
        <begin position="55"/>
        <end position="199"/>
    </location>
</feature>
<feature type="binding site" evidence="3">
    <location>
        <position position="128"/>
    </location>
    <ligand>
        <name>Cu cation</name>
        <dbReference type="ChEBI" id="CHEBI:23378"/>
        <label>A1</label>
    </ligand>
</feature>
<feature type="binding site" evidence="3">
    <location>
        <position position="163"/>
    </location>
    <ligand>
        <name>Cu cation</name>
        <dbReference type="ChEBI" id="CHEBI:23378"/>
        <label>A1</label>
    </ligand>
</feature>
<feature type="binding site" evidence="3">
    <location>
        <position position="163"/>
    </location>
    <ligand>
        <name>Cu cation</name>
        <dbReference type="ChEBI" id="CHEBI:23378"/>
        <label>A2</label>
    </ligand>
</feature>
<feature type="binding site" evidence="3">
    <location>
        <position position="165"/>
    </location>
    <ligand>
        <name>Cu cation</name>
        <dbReference type="ChEBI" id="CHEBI:23378"/>
        <label>A2</label>
    </ligand>
</feature>
<feature type="binding site" evidence="3">
    <location>
        <position position="165"/>
    </location>
    <ligand>
        <name>Mg(2+)</name>
        <dbReference type="ChEBI" id="CHEBI:18420"/>
        <note>ligand shared with MT-CO1</note>
    </ligand>
</feature>
<feature type="binding site" evidence="3">
    <location>
        <position position="167"/>
    </location>
    <ligand>
        <name>Cu cation</name>
        <dbReference type="ChEBI" id="CHEBI:23378"/>
        <label>A1</label>
    </ligand>
</feature>
<feature type="binding site" evidence="3">
    <location>
        <position position="167"/>
    </location>
    <ligand>
        <name>Cu cation</name>
        <dbReference type="ChEBI" id="CHEBI:23378"/>
        <label>A2</label>
    </ligand>
</feature>
<feature type="binding site" evidence="3">
    <location>
        <position position="171"/>
    </location>
    <ligand>
        <name>Cu cation</name>
        <dbReference type="ChEBI" id="CHEBI:23378"/>
        <label>A2</label>
    </ligand>
</feature>
<feature type="binding site" evidence="3">
    <location>
        <position position="174"/>
    </location>
    <ligand>
        <name>Cu cation</name>
        <dbReference type="ChEBI" id="CHEBI:23378"/>
        <label>A1</label>
    </ligand>
</feature>
<feature type="non-terminal residue">
    <location>
        <position position="1"/>
    </location>
</feature>